<keyword id="KW-0249">Electron transport</keyword>
<keyword id="KW-0349">Heme</keyword>
<keyword id="KW-0408">Iron</keyword>
<keyword id="KW-0472">Membrane</keyword>
<keyword id="KW-0479">Metal-binding</keyword>
<keyword id="KW-0496">Mitochondrion</keyword>
<keyword id="KW-0999">Mitochondrion inner membrane</keyword>
<keyword id="KW-0679">Respiratory chain</keyword>
<keyword id="KW-0812">Transmembrane</keyword>
<keyword id="KW-1133">Transmembrane helix</keyword>
<keyword id="KW-0813">Transport</keyword>
<keyword id="KW-0830">Ubiquinone</keyword>
<reference key="1">
    <citation type="journal article" date="2008" name="Mol. Biol. Evol.">
        <title>Mitochondrial genome evolution in the social amoebae.</title>
        <authorList>
            <person name="Heidel A.J."/>
            <person name="Gloeckner G."/>
        </authorList>
    </citation>
    <scope>NUCLEOTIDE SEQUENCE [LARGE SCALE GENOMIC DNA]</scope>
</reference>
<geneLocation type="mitochondrion"/>
<dbReference type="EMBL" id="DQ336395">
    <property type="protein sequence ID" value="ABC60385.1"/>
    <property type="molecule type" value="Genomic_DNA"/>
</dbReference>
<dbReference type="RefSeq" id="YP_492634.1">
    <property type="nucleotide sequence ID" value="NC_007787.2"/>
</dbReference>
<dbReference type="SMR" id="Q2LCQ8"/>
<dbReference type="GeneID" id="3912627"/>
<dbReference type="GO" id="GO:0005743">
    <property type="term" value="C:mitochondrial inner membrane"/>
    <property type="evidence" value="ECO:0007669"/>
    <property type="project" value="UniProtKB-SubCell"/>
</dbReference>
<dbReference type="GO" id="GO:0045275">
    <property type="term" value="C:respiratory chain complex III"/>
    <property type="evidence" value="ECO:0007669"/>
    <property type="project" value="InterPro"/>
</dbReference>
<dbReference type="GO" id="GO:0046872">
    <property type="term" value="F:metal ion binding"/>
    <property type="evidence" value="ECO:0007669"/>
    <property type="project" value="UniProtKB-KW"/>
</dbReference>
<dbReference type="GO" id="GO:0008121">
    <property type="term" value="F:ubiquinol-cytochrome-c reductase activity"/>
    <property type="evidence" value="ECO:0007669"/>
    <property type="project" value="InterPro"/>
</dbReference>
<dbReference type="GO" id="GO:0006122">
    <property type="term" value="P:mitochondrial electron transport, ubiquinol to cytochrome c"/>
    <property type="evidence" value="ECO:0007669"/>
    <property type="project" value="TreeGrafter"/>
</dbReference>
<dbReference type="CDD" id="cd00290">
    <property type="entry name" value="cytochrome_b_C"/>
    <property type="match status" value="1"/>
</dbReference>
<dbReference type="CDD" id="cd00284">
    <property type="entry name" value="Cytochrome_b_N"/>
    <property type="match status" value="1"/>
</dbReference>
<dbReference type="Gene3D" id="1.20.810.10">
    <property type="entry name" value="Cytochrome Bc1 Complex, Chain C"/>
    <property type="match status" value="1"/>
</dbReference>
<dbReference type="InterPro" id="IPR005798">
    <property type="entry name" value="Cyt_b/b6_C"/>
</dbReference>
<dbReference type="InterPro" id="IPR036150">
    <property type="entry name" value="Cyt_b/b6_C_sf"/>
</dbReference>
<dbReference type="InterPro" id="IPR005797">
    <property type="entry name" value="Cyt_b/b6_N"/>
</dbReference>
<dbReference type="InterPro" id="IPR027387">
    <property type="entry name" value="Cytb/b6-like_sf"/>
</dbReference>
<dbReference type="InterPro" id="IPR030689">
    <property type="entry name" value="Cytochrome_b"/>
</dbReference>
<dbReference type="InterPro" id="IPR048260">
    <property type="entry name" value="Cytochrome_b_C_euk/bac"/>
</dbReference>
<dbReference type="InterPro" id="IPR048259">
    <property type="entry name" value="Cytochrome_b_N_euk/bac"/>
</dbReference>
<dbReference type="InterPro" id="IPR016174">
    <property type="entry name" value="Di-haem_cyt_TM"/>
</dbReference>
<dbReference type="PANTHER" id="PTHR19271">
    <property type="entry name" value="CYTOCHROME B"/>
    <property type="match status" value="1"/>
</dbReference>
<dbReference type="PANTHER" id="PTHR19271:SF16">
    <property type="entry name" value="CYTOCHROME B"/>
    <property type="match status" value="1"/>
</dbReference>
<dbReference type="Pfam" id="PF00032">
    <property type="entry name" value="Cytochrom_B_C"/>
    <property type="match status" value="1"/>
</dbReference>
<dbReference type="Pfam" id="PF00033">
    <property type="entry name" value="Cytochrome_B"/>
    <property type="match status" value="1"/>
</dbReference>
<dbReference type="PIRSF" id="PIRSF038885">
    <property type="entry name" value="COB"/>
    <property type="match status" value="1"/>
</dbReference>
<dbReference type="SUPFAM" id="SSF81648">
    <property type="entry name" value="a domain/subunit of cytochrome bc1 complex (Ubiquinol-cytochrome c reductase)"/>
    <property type="match status" value="1"/>
</dbReference>
<dbReference type="SUPFAM" id="SSF81342">
    <property type="entry name" value="Transmembrane di-heme cytochromes"/>
    <property type="match status" value="1"/>
</dbReference>
<dbReference type="PROSITE" id="PS51003">
    <property type="entry name" value="CYTB_CTER"/>
    <property type="match status" value="1"/>
</dbReference>
<dbReference type="PROSITE" id="PS51002">
    <property type="entry name" value="CYTB_NTER"/>
    <property type="match status" value="1"/>
</dbReference>
<feature type="chain" id="PRO_0000312385" description="Cytochrome b">
    <location>
        <begin position="1"/>
        <end position="387"/>
    </location>
</feature>
<feature type="transmembrane region" description="Helical" evidence="2">
    <location>
        <begin position="32"/>
        <end position="52"/>
    </location>
</feature>
<feature type="transmembrane region" description="Helical" evidence="2">
    <location>
        <begin position="76"/>
        <end position="98"/>
    </location>
</feature>
<feature type="transmembrane region" description="Helical" evidence="2">
    <location>
        <begin position="113"/>
        <end position="133"/>
    </location>
</feature>
<feature type="transmembrane region" description="Helical" evidence="2">
    <location>
        <begin position="179"/>
        <end position="199"/>
    </location>
</feature>
<feature type="transmembrane region" description="Helical" evidence="2">
    <location>
        <begin position="225"/>
        <end position="245"/>
    </location>
</feature>
<feature type="transmembrane region" description="Helical" evidence="3">
    <location>
        <begin position="290"/>
        <end position="310"/>
    </location>
</feature>
<feature type="transmembrane region" description="Helical" evidence="3">
    <location>
        <begin position="325"/>
        <end position="345"/>
    </location>
</feature>
<feature type="transmembrane region" description="Helical" evidence="3">
    <location>
        <begin position="353"/>
        <end position="373"/>
    </location>
</feature>
<feature type="binding site" description="axial binding residue" evidence="2">
    <location>
        <position position="82"/>
    </location>
    <ligand>
        <name>heme b</name>
        <dbReference type="ChEBI" id="CHEBI:60344"/>
        <label>b562</label>
    </ligand>
    <ligandPart>
        <name>Fe</name>
        <dbReference type="ChEBI" id="CHEBI:18248"/>
    </ligandPart>
</feature>
<feature type="binding site" description="axial binding residue" evidence="2">
    <location>
        <position position="96"/>
    </location>
    <ligand>
        <name>heme b</name>
        <dbReference type="ChEBI" id="CHEBI:60344"/>
        <label>b566</label>
    </ligand>
    <ligandPart>
        <name>Fe</name>
        <dbReference type="ChEBI" id="CHEBI:18248"/>
    </ligandPart>
</feature>
<feature type="binding site" description="axial binding residue" evidence="2">
    <location>
        <position position="183"/>
    </location>
    <ligand>
        <name>heme b</name>
        <dbReference type="ChEBI" id="CHEBI:60344"/>
        <label>b562</label>
    </ligand>
    <ligandPart>
        <name>Fe</name>
        <dbReference type="ChEBI" id="CHEBI:18248"/>
    </ligandPart>
</feature>
<feature type="binding site" description="axial binding residue" evidence="2">
    <location>
        <position position="197"/>
    </location>
    <ligand>
        <name>heme b</name>
        <dbReference type="ChEBI" id="CHEBI:60344"/>
        <label>b566</label>
    </ligand>
    <ligandPart>
        <name>Fe</name>
        <dbReference type="ChEBI" id="CHEBI:18248"/>
    </ligandPart>
</feature>
<comment type="function">
    <text evidence="2">Component of the ubiquinol-cytochrome c reductase complex (complex III or cytochrome b-c1 complex) that is part of the mitochondrial respiratory chain. The b-c1 complex mediates electron transfer from ubiquinol to cytochrome c. Contributes to the generation of a proton gradient across the mitochondrial membrane that is then used for ATP synthesis.</text>
</comment>
<comment type="cofactor">
    <cofactor evidence="2">
        <name>heme b</name>
        <dbReference type="ChEBI" id="CHEBI:60344"/>
    </cofactor>
    <text evidence="2">Binds 2 heme b groups non-covalently.</text>
</comment>
<comment type="subunit">
    <text evidence="1">The main subunits of complex b-c1 are: cytochrome b, cytochrome c1 and the Rieske protein.</text>
</comment>
<comment type="subcellular location">
    <subcellularLocation>
        <location evidence="2">Mitochondrion inner membrane</location>
        <topology evidence="2">Multi-pass membrane protein</topology>
    </subcellularLocation>
</comment>
<comment type="miscellaneous">
    <text evidence="1">Heme 1 (or BL or b562) is low-potential and absorbs at about 562 nm, and heme 2 (or BH or b566) is high-potential and absorbs at about 566 nm.</text>
</comment>
<comment type="similarity">
    <text evidence="4 5">Belongs to the cytochrome b family.</text>
</comment>
<comment type="caution">
    <text evidence="2">The protein contains an even number of transmembrane helices, fewer than predicted by bioinformatics tools.</text>
</comment>
<organism>
    <name type="scientific">Dictyostelium citrinum</name>
    <name type="common">Slime mold</name>
    <dbReference type="NCBI Taxonomy" id="361072"/>
    <lineage>
        <taxon>Eukaryota</taxon>
        <taxon>Amoebozoa</taxon>
        <taxon>Evosea</taxon>
        <taxon>Eumycetozoa</taxon>
        <taxon>Dictyostelia</taxon>
        <taxon>Dictyosteliales</taxon>
        <taxon>Dictyosteliaceae</taxon>
        <taxon>Dictyostelium</taxon>
    </lineage>
</organism>
<evidence type="ECO:0000250" key="1"/>
<evidence type="ECO:0000250" key="2">
    <source>
        <dbReference type="UniProtKB" id="P00163"/>
    </source>
</evidence>
<evidence type="ECO:0000255" key="3"/>
<evidence type="ECO:0000255" key="4">
    <source>
        <dbReference type="PROSITE-ProRule" id="PRU00967"/>
    </source>
</evidence>
<evidence type="ECO:0000255" key="5">
    <source>
        <dbReference type="PROSITE-ProRule" id="PRU00968"/>
    </source>
</evidence>
<gene>
    <name type="primary">cytB</name>
    <name type="synonym">cob</name>
    <name type="synonym">mtcyb</name>
</gene>
<proteinExistence type="inferred from homology"/>
<accession>Q2LCQ8</accession>
<protein>
    <recommendedName>
        <fullName>Cytochrome b</fullName>
    </recommendedName>
    <alternativeName>
        <fullName>Complex III subunit 3</fullName>
    </alternativeName>
    <alternativeName>
        <fullName>Complex III subunit III</fullName>
    </alternativeName>
    <alternativeName>
        <fullName>Cytochrome b-c1 complex subunit 3</fullName>
    </alternativeName>
    <alternativeName>
        <fullName>Ubiquinol-cytochrome-c reductase complex cytochrome b subunit</fullName>
    </alternativeName>
</protein>
<sequence>MRLVKKNVIINGIYEAGVRYPEPANISYLWNFGFFSLVCLIIQLVSGILLAMHYSAHVDLAFNSIERLVREVDFGWLLRYVHANGASFFFIVVYVHMLRGLYFGSYQKPNAMLWVSGVVIFLLLIITGFLGYVLPWGQMSYWAATVITNLVTVIPVVGEDIVIWLWGGFNVDNPTLNRFFSLHYLCPFIIVGLVGLHIIFLRENGSTNPLGVKSNVDQIPFTPYFTIKDLFSFMIFLVLFFAFVFFAPNYLGHPDNYLMADSNVTPAHIVPEWYLLPFYAMLRSIPNKVLGVLALVLAIVVLAFLPFLTISEVRSSYFRKIHKHLFWSFLALCFFLGFLGSQPAAAPYLTCGLYSTILYFVYILVLFPYIYMVEKVIIKSILKTNKK</sequence>
<name>CYB_DICCI</name>